<gene>
    <name evidence="1" type="primary">lpxK</name>
    <name type="ordered locus">GDI3243</name>
    <name type="ordered locus">Gdia_3121</name>
</gene>
<reference key="1">
    <citation type="journal article" date="2009" name="BMC Genomics">
        <title>Complete genome sequence of the sugarcane nitrogen-fixing endophyte Gluconacetobacter diazotrophicus Pal5.</title>
        <authorList>
            <person name="Bertalan M."/>
            <person name="Albano R."/>
            <person name="de Padua V."/>
            <person name="Rouws L."/>
            <person name="Rojas C."/>
            <person name="Hemerly A."/>
            <person name="Teixeira K."/>
            <person name="Schwab S."/>
            <person name="Araujo J."/>
            <person name="Oliveira A."/>
            <person name="Franca L."/>
            <person name="Magalhaes V."/>
            <person name="Alqueres S."/>
            <person name="Cardoso A."/>
            <person name="Almeida W."/>
            <person name="Loureiro M.M."/>
            <person name="Nogueira E."/>
            <person name="Cidade D."/>
            <person name="Oliveira D."/>
            <person name="Simao T."/>
            <person name="Macedo J."/>
            <person name="Valadao A."/>
            <person name="Dreschsel M."/>
            <person name="Freitas F."/>
            <person name="Vidal M."/>
            <person name="Guedes H."/>
            <person name="Rodrigues E."/>
            <person name="Meneses C."/>
            <person name="Brioso P."/>
            <person name="Pozzer L."/>
            <person name="Figueiredo D."/>
            <person name="Montano H."/>
            <person name="Junior J."/>
            <person name="de Souza Filho G."/>
            <person name="Martin Quintana Flores V."/>
            <person name="Ferreira B."/>
            <person name="Branco A."/>
            <person name="Gonzalez P."/>
            <person name="Guillobel H."/>
            <person name="Lemos M."/>
            <person name="Seibel L."/>
            <person name="Macedo J."/>
            <person name="Alves-Ferreira M."/>
            <person name="Sachetto-Martins G."/>
            <person name="Coelho A."/>
            <person name="Santos E."/>
            <person name="Amaral G."/>
            <person name="Neves A."/>
            <person name="Pacheco A.B."/>
            <person name="Carvalho D."/>
            <person name="Lery L."/>
            <person name="Bisch P."/>
            <person name="Rossle S.C."/>
            <person name="Urmenyi T."/>
            <person name="Rael Pereira A."/>
            <person name="Silva R."/>
            <person name="Rondinelli E."/>
            <person name="von Kruger W."/>
            <person name="Martins O."/>
            <person name="Baldani J.I."/>
            <person name="Ferreira P.C."/>
        </authorList>
    </citation>
    <scope>NUCLEOTIDE SEQUENCE [LARGE SCALE GENOMIC DNA]</scope>
    <source>
        <strain>ATCC 49037 / DSM 5601 / CCUG 37298 / CIP 103539 / LMG 7603 / PAl5</strain>
    </source>
</reference>
<reference key="2">
    <citation type="journal article" date="2010" name="Stand. Genomic Sci.">
        <title>Two genome sequences of the same bacterial strain, Gluconacetobacter diazotrophicus PAl 5, suggest a new standard in genome sequence submission.</title>
        <authorList>
            <person name="Giongo A."/>
            <person name="Tyler H.L."/>
            <person name="Zipperer U.N."/>
            <person name="Triplett E.W."/>
        </authorList>
    </citation>
    <scope>NUCLEOTIDE SEQUENCE [LARGE SCALE GENOMIC DNA]</scope>
    <source>
        <strain>ATCC 49037 / DSM 5601 / CCUG 37298 / CIP 103539 / LMG 7603 / PAl5</strain>
    </source>
</reference>
<organism>
    <name type="scientific">Gluconacetobacter diazotrophicus (strain ATCC 49037 / DSM 5601 / CCUG 37298 / CIP 103539 / LMG 7603 / PAl5)</name>
    <dbReference type="NCBI Taxonomy" id="272568"/>
    <lineage>
        <taxon>Bacteria</taxon>
        <taxon>Pseudomonadati</taxon>
        <taxon>Pseudomonadota</taxon>
        <taxon>Alphaproteobacteria</taxon>
        <taxon>Acetobacterales</taxon>
        <taxon>Acetobacteraceae</taxon>
        <taxon>Gluconacetobacter</taxon>
    </lineage>
</organism>
<accession>A9H0Y0</accession>
<sequence length="327" mass="34135">MHAPRFWSGGDGGWPARLLAPAAALYTLATARRMRGTGWRAPVPVLCCGNLTAGGAGKTTVALDLAARLVARGRHVHILTRGYGGRARGPLLVDPARHSAAEVGDEALLLARVAPCHVSADRAAGARAAVAAGADCLVMDDGFQNPGLRQDMGLLVIDGGSGFGNGHVLPAGPLREPVAQGCRRARAAILIGGDRTGALAHLPPALPVLRADLAMQEAAPMLAGRPAIAFAGIGRPDKFFDGLRAQGIRLAACLPFPDHHAYRPRDVRRLSAMAAVQGAVLLTTPKDAVRLPPAIRAQVRSVDVTLAWADPMAPERLLDMWLDKASS</sequence>
<evidence type="ECO:0000255" key="1">
    <source>
        <dbReference type="HAMAP-Rule" id="MF_00409"/>
    </source>
</evidence>
<name>LPXK_GLUDA</name>
<dbReference type="EC" id="2.7.1.130" evidence="1"/>
<dbReference type="EMBL" id="CP001189">
    <property type="protein sequence ID" value="ACI52851.1"/>
    <property type="molecule type" value="Genomic_DNA"/>
</dbReference>
<dbReference type="EMBL" id="AM889285">
    <property type="protein sequence ID" value="CAP57186.1"/>
    <property type="molecule type" value="Genomic_DNA"/>
</dbReference>
<dbReference type="RefSeq" id="WP_012227683.1">
    <property type="nucleotide sequence ID" value="NC_010125.1"/>
</dbReference>
<dbReference type="SMR" id="A9H0Y0"/>
<dbReference type="STRING" id="272568.GDI3243"/>
<dbReference type="KEGG" id="gdi:GDI3243"/>
<dbReference type="KEGG" id="gdj:Gdia_3121"/>
<dbReference type="eggNOG" id="COG1663">
    <property type="taxonomic scope" value="Bacteria"/>
</dbReference>
<dbReference type="HOGENOM" id="CLU_038816_0_0_5"/>
<dbReference type="OrthoDB" id="9766423at2"/>
<dbReference type="UniPathway" id="UPA00359">
    <property type="reaction ID" value="UER00482"/>
</dbReference>
<dbReference type="Proteomes" id="UP000001176">
    <property type="component" value="Chromosome"/>
</dbReference>
<dbReference type="GO" id="GO:0005886">
    <property type="term" value="C:plasma membrane"/>
    <property type="evidence" value="ECO:0007669"/>
    <property type="project" value="TreeGrafter"/>
</dbReference>
<dbReference type="GO" id="GO:0005524">
    <property type="term" value="F:ATP binding"/>
    <property type="evidence" value="ECO:0007669"/>
    <property type="project" value="UniProtKB-UniRule"/>
</dbReference>
<dbReference type="GO" id="GO:0009029">
    <property type="term" value="F:tetraacyldisaccharide 4'-kinase activity"/>
    <property type="evidence" value="ECO:0007669"/>
    <property type="project" value="UniProtKB-UniRule"/>
</dbReference>
<dbReference type="GO" id="GO:0009245">
    <property type="term" value="P:lipid A biosynthetic process"/>
    <property type="evidence" value="ECO:0007669"/>
    <property type="project" value="UniProtKB-UniRule"/>
</dbReference>
<dbReference type="GO" id="GO:0009244">
    <property type="term" value="P:lipopolysaccharide core region biosynthetic process"/>
    <property type="evidence" value="ECO:0007669"/>
    <property type="project" value="TreeGrafter"/>
</dbReference>
<dbReference type="CDD" id="cd01983">
    <property type="entry name" value="SIMIBI"/>
    <property type="match status" value="1"/>
</dbReference>
<dbReference type="HAMAP" id="MF_00409">
    <property type="entry name" value="LpxK"/>
    <property type="match status" value="1"/>
</dbReference>
<dbReference type="InterPro" id="IPR003758">
    <property type="entry name" value="LpxK"/>
</dbReference>
<dbReference type="InterPro" id="IPR027417">
    <property type="entry name" value="P-loop_NTPase"/>
</dbReference>
<dbReference type="NCBIfam" id="TIGR00682">
    <property type="entry name" value="lpxK"/>
    <property type="match status" value="1"/>
</dbReference>
<dbReference type="PANTHER" id="PTHR42724">
    <property type="entry name" value="TETRAACYLDISACCHARIDE 4'-KINASE"/>
    <property type="match status" value="1"/>
</dbReference>
<dbReference type="PANTHER" id="PTHR42724:SF1">
    <property type="entry name" value="TETRAACYLDISACCHARIDE 4'-KINASE, MITOCHONDRIAL-RELATED"/>
    <property type="match status" value="1"/>
</dbReference>
<dbReference type="Pfam" id="PF02606">
    <property type="entry name" value="LpxK"/>
    <property type="match status" value="1"/>
</dbReference>
<dbReference type="SUPFAM" id="SSF52540">
    <property type="entry name" value="P-loop containing nucleoside triphosphate hydrolases"/>
    <property type="match status" value="1"/>
</dbReference>
<protein>
    <recommendedName>
        <fullName evidence="1">Tetraacyldisaccharide 4'-kinase</fullName>
        <ecNumber evidence="1">2.7.1.130</ecNumber>
    </recommendedName>
    <alternativeName>
        <fullName evidence="1">Lipid A 4'-kinase</fullName>
    </alternativeName>
</protein>
<keyword id="KW-0067">ATP-binding</keyword>
<keyword id="KW-0418">Kinase</keyword>
<keyword id="KW-0441">Lipid A biosynthesis</keyword>
<keyword id="KW-0444">Lipid biosynthesis</keyword>
<keyword id="KW-0443">Lipid metabolism</keyword>
<keyword id="KW-0547">Nucleotide-binding</keyword>
<keyword id="KW-1185">Reference proteome</keyword>
<keyword id="KW-0808">Transferase</keyword>
<comment type="function">
    <text evidence="1">Transfers the gamma-phosphate of ATP to the 4'-position of a tetraacyldisaccharide 1-phosphate intermediate (termed DS-1-P) to form tetraacyldisaccharide 1,4'-bis-phosphate (lipid IVA).</text>
</comment>
<comment type="catalytic activity">
    <reaction evidence="1">
        <text>a lipid A disaccharide + ATP = a lipid IVA + ADP + H(+)</text>
        <dbReference type="Rhea" id="RHEA:67840"/>
        <dbReference type="ChEBI" id="CHEBI:15378"/>
        <dbReference type="ChEBI" id="CHEBI:30616"/>
        <dbReference type="ChEBI" id="CHEBI:176343"/>
        <dbReference type="ChEBI" id="CHEBI:176425"/>
        <dbReference type="ChEBI" id="CHEBI:456216"/>
        <dbReference type="EC" id="2.7.1.130"/>
    </reaction>
</comment>
<comment type="pathway">
    <text evidence="1">Glycolipid biosynthesis; lipid IV(A) biosynthesis; lipid IV(A) from (3R)-3-hydroxytetradecanoyl-[acyl-carrier-protein] and UDP-N-acetyl-alpha-D-glucosamine: step 6/6.</text>
</comment>
<comment type="similarity">
    <text evidence="1">Belongs to the LpxK family.</text>
</comment>
<proteinExistence type="inferred from homology"/>
<feature type="chain" id="PRO_1000123719" description="Tetraacyldisaccharide 4'-kinase">
    <location>
        <begin position="1"/>
        <end position="327"/>
    </location>
</feature>
<feature type="binding site" evidence="1">
    <location>
        <begin position="52"/>
        <end position="59"/>
    </location>
    <ligand>
        <name>ATP</name>
        <dbReference type="ChEBI" id="CHEBI:30616"/>
    </ligand>
</feature>